<organism>
    <name type="scientific">Shigella flexneri</name>
    <dbReference type="NCBI Taxonomy" id="623"/>
    <lineage>
        <taxon>Bacteria</taxon>
        <taxon>Pseudomonadati</taxon>
        <taxon>Pseudomonadota</taxon>
        <taxon>Gammaproteobacteria</taxon>
        <taxon>Enterobacterales</taxon>
        <taxon>Enterobacteriaceae</taxon>
        <taxon>Shigella</taxon>
    </lineage>
</organism>
<dbReference type="EMBL" id="L04309">
    <property type="protein sequence ID" value="AAA26519.1"/>
    <property type="molecule type" value="Genomic_DNA"/>
</dbReference>
<dbReference type="EMBL" id="AL391753">
    <property type="protein sequence ID" value="CAC05810.1"/>
    <property type="molecule type" value="Genomic_DNA"/>
</dbReference>
<dbReference type="EMBL" id="AF348706">
    <property type="protein sequence ID" value="AAK18454.1"/>
    <property type="molecule type" value="Genomic_DNA"/>
</dbReference>
<dbReference type="EMBL" id="AF386526">
    <property type="protein sequence ID" value="AAL72337.1"/>
    <property type="molecule type" value="Genomic_DNA"/>
</dbReference>
<dbReference type="RefSeq" id="NP_085298.1">
    <property type="nucleotide sequence ID" value="NC_002698.1"/>
</dbReference>
<dbReference type="RefSeq" id="NP_858268.1">
    <property type="nucleotide sequence ID" value="NC_004851.1"/>
</dbReference>
<dbReference type="RefSeq" id="WP_010921668.1">
    <property type="nucleotide sequence ID" value="NZ_QWST01000007.1"/>
</dbReference>
<dbReference type="RefSeq" id="YP_009062492.1">
    <property type="nucleotide sequence ID" value="NC_024996.1"/>
</dbReference>
<dbReference type="SMR" id="Q07568"/>
<dbReference type="CAZy" id="GH23">
    <property type="family name" value="Glycoside Hydrolase Family 23"/>
</dbReference>
<dbReference type="PaxDb" id="198214-CP0135"/>
<dbReference type="GeneID" id="1238040"/>
<dbReference type="KEGG" id="sfl:CP0135"/>
<dbReference type="PATRIC" id="fig|198214.7.peg.5388"/>
<dbReference type="HOGENOM" id="CLU_094905_1_0_6"/>
<dbReference type="Proteomes" id="UP000001006">
    <property type="component" value="Plasmid pCP301"/>
</dbReference>
<dbReference type="CDD" id="cd13400">
    <property type="entry name" value="LT_IagB-like"/>
    <property type="match status" value="1"/>
</dbReference>
<dbReference type="Gene3D" id="1.10.530.10">
    <property type="match status" value="1"/>
</dbReference>
<dbReference type="InterPro" id="IPR023346">
    <property type="entry name" value="Lysozyme-like_dom_sf"/>
</dbReference>
<dbReference type="InterPro" id="IPR008258">
    <property type="entry name" value="Transglycosylase_SLT_dom_1"/>
</dbReference>
<dbReference type="Pfam" id="PF01464">
    <property type="entry name" value="SLT"/>
    <property type="match status" value="1"/>
</dbReference>
<dbReference type="SUPFAM" id="SSF53955">
    <property type="entry name" value="Lysozyme-like"/>
    <property type="match status" value="1"/>
</dbReference>
<accession>Q07568</accession>
<accession>Q8VSH3</accession>
<geneLocation type="plasmid">
    <name>pWR100</name>
</geneLocation>
<geneLocation type="plasmid">
    <name>pWR501</name>
</geneLocation>
<geneLocation type="plasmid">
    <name>pCP301</name>
</geneLocation>
<evidence type="ECO:0000255" key="1"/>
<evidence type="ECO:0000305" key="2"/>
<comment type="similarity">
    <text evidence="2">Belongs to the IagB/IpgF/P19 family.</text>
</comment>
<sequence>MSRFVFILLCFIPHLGRADCWDKAGERYNIPSSLLKAIAEKESGFNKSAVNVNNNGSKDYGIMQINDFHSKRLREMGYSEEMLISHPCLSVHYAAKLLNEFMMMYGRGWEAVGAYNAGTSPKKKKERLKYAEDIYRRYLRIAAESKQNNRRI</sequence>
<proteinExistence type="inferred from homology"/>
<reference key="1">
    <citation type="journal article" date="1993" name="Infect. Immun.">
        <title>Characterization of the Shigella flexneri ipgD and ipgF genes, which are located in the proximal part of the mxi locus.</title>
        <authorList>
            <person name="Allaoui A."/>
            <person name="Menard R."/>
            <person name="Sansonetti P.J."/>
            <person name="Parsot C."/>
        </authorList>
    </citation>
    <scope>NUCLEOTIDE SEQUENCE [GENOMIC DNA]</scope>
    <source>
        <strain>M90T / Serotype 5a</strain>
        <plasmid>pWR100</plasmid>
    </source>
</reference>
<reference key="2">
    <citation type="journal article" date="2000" name="Mol. Microbiol.">
        <title>The virulence plasmid pWR100 and the repertoire of proteins secreted by the type III secretion apparatus of Shigella flexneri.</title>
        <authorList>
            <person name="Buchrieser C."/>
            <person name="Glaser P."/>
            <person name="Rusniok C."/>
            <person name="Nedjari H."/>
            <person name="d'Hauteville H."/>
            <person name="Kunst F."/>
            <person name="Sansonetti P.J."/>
            <person name="Parsot C."/>
        </authorList>
    </citation>
    <scope>NUCLEOTIDE SEQUENCE [GENOMIC DNA]</scope>
    <source>
        <strain>M90T / Serotype 5a</strain>
        <plasmid>pWR100</plasmid>
    </source>
</reference>
<reference key="3">
    <citation type="journal article" date="2001" name="Infect. Immun.">
        <title>Complete DNA sequence and analysis of the large virulence plasmid of Shigella flexneri.</title>
        <authorList>
            <person name="Venkatesan M.M."/>
            <person name="Goldberg M.B."/>
            <person name="Rose D.J."/>
            <person name="Grotbeck E.J."/>
            <person name="Burland V."/>
            <person name="Blattner F.R."/>
        </authorList>
    </citation>
    <scope>NUCLEOTIDE SEQUENCE [GENOMIC DNA]</scope>
    <source>
        <strain>M90T / Serotype 5a</strain>
        <plasmid>pWR501</plasmid>
    </source>
</reference>
<reference key="4">
    <citation type="journal article" date="2002" name="Nucleic Acids Res.">
        <title>Genome sequence of Shigella flexneri 2a: insights into pathogenicity through comparison with genomes of Escherichia coli K12 and O157.</title>
        <authorList>
            <person name="Jin Q."/>
            <person name="Yuan Z."/>
            <person name="Xu J."/>
            <person name="Wang Y."/>
            <person name="Shen Y."/>
            <person name="Lu W."/>
            <person name="Wang J."/>
            <person name="Liu H."/>
            <person name="Yang J."/>
            <person name="Yang F."/>
            <person name="Zhang X."/>
            <person name="Zhang J."/>
            <person name="Yang G."/>
            <person name="Wu H."/>
            <person name="Qu D."/>
            <person name="Dong J."/>
            <person name="Sun L."/>
            <person name="Xue Y."/>
            <person name="Zhao A."/>
            <person name="Gao Y."/>
            <person name="Zhu J."/>
            <person name="Kan B."/>
            <person name="Ding K."/>
            <person name="Chen S."/>
            <person name="Cheng H."/>
            <person name="Yao Z."/>
            <person name="He B."/>
            <person name="Chen R."/>
            <person name="Ma D."/>
            <person name="Qiang B."/>
            <person name="Wen Y."/>
            <person name="Hou Y."/>
            <person name="Yu J."/>
        </authorList>
    </citation>
    <scope>NUCLEOTIDE SEQUENCE [LARGE SCALE GENOMIC DNA]</scope>
    <source>
        <strain>301 / Serotype 2a</strain>
        <plasmid>pCP301</plasmid>
    </source>
</reference>
<name>IPGF_SHIFL</name>
<keyword id="KW-0614">Plasmid</keyword>
<keyword id="KW-1185">Reference proteome</keyword>
<keyword id="KW-0732">Signal</keyword>
<keyword id="KW-0843">Virulence</keyword>
<gene>
    <name type="primary">ipgF</name>
    <name type="ordered locus">CP0135</name>
</gene>
<protein>
    <recommendedName>
        <fullName>Protein IpgF</fullName>
    </recommendedName>
</protein>
<feature type="signal peptide" evidence="1">
    <location>
        <begin position="1"/>
        <end position="17"/>
    </location>
</feature>
<feature type="chain" id="PRO_0000021518" description="Protein IpgF">
    <location>
        <begin position="18"/>
        <end position="152"/>
    </location>
</feature>
<feature type="sequence variant" description="In plasmid pCP301.">
    <original>H</original>
    <variation>Y</variation>
    <location>
        <position position="14"/>
    </location>
</feature>